<dbReference type="EC" id="3.1.3.11" evidence="1"/>
<dbReference type="EMBL" id="BA000037">
    <property type="protein sequence ID" value="BAC93198.1"/>
    <property type="molecule type" value="Genomic_DNA"/>
</dbReference>
<dbReference type="RefSeq" id="WP_011078783.1">
    <property type="nucleotide sequence ID" value="NC_005139.1"/>
</dbReference>
<dbReference type="SMR" id="Q7MPD0"/>
<dbReference type="STRING" id="672.VV93_v1c04000"/>
<dbReference type="KEGG" id="vvy:VV0434"/>
<dbReference type="eggNOG" id="COG0158">
    <property type="taxonomic scope" value="Bacteria"/>
</dbReference>
<dbReference type="HOGENOM" id="CLU_039977_2_2_6"/>
<dbReference type="UniPathway" id="UPA00138"/>
<dbReference type="Proteomes" id="UP000002675">
    <property type="component" value="Chromosome I"/>
</dbReference>
<dbReference type="GO" id="GO:0005829">
    <property type="term" value="C:cytosol"/>
    <property type="evidence" value="ECO:0007669"/>
    <property type="project" value="TreeGrafter"/>
</dbReference>
<dbReference type="GO" id="GO:0042132">
    <property type="term" value="F:fructose 1,6-bisphosphate 1-phosphatase activity"/>
    <property type="evidence" value="ECO:0007669"/>
    <property type="project" value="UniProtKB-UniRule"/>
</dbReference>
<dbReference type="GO" id="GO:0000287">
    <property type="term" value="F:magnesium ion binding"/>
    <property type="evidence" value="ECO:0007669"/>
    <property type="project" value="UniProtKB-UniRule"/>
</dbReference>
<dbReference type="GO" id="GO:0030388">
    <property type="term" value="P:fructose 1,6-bisphosphate metabolic process"/>
    <property type="evidence" value="ECO:0007669"/>
    <property type="project" value="TreeGrafter"/>
</dbReference>
<dbReference type="GO" id="GO:0006002">
    <property type="term" value="P:fructose 6-phosphate metabolic process"/>
    <property type="evidence" value="ECO:0007669"/>
    <property type="project" value="TreeGrafter"/>
</dbReference>
<dbReference type="GO" id="GO:0006000">
    <property type="term" value="P:fructose metabolic process"/>
    <property type="evidence" value="ECO:0007669"/>
    <property type="project" value="TreeGrafter"/>
</dbReference>
<dbReference type="GO" id="GO:0006094">
    <property type="term" value="P:gluconeogenesis"/>
    <property type="evidence" value="ECO:0007669"/>
    <property type="project" value="UniProtKB-UniRule"/>
</dbReference>
<dbReference type="GO" id="GO:0005986">
    <property type="term" value="P:sucrose biosynthetic process"/>
    <property type="evidence" value="ECO:0007669"/>
    <property type="project" value="TreeGrafter"/>
</dbReference>
<dbReference type="CDD" id="cd00354">
    <property type="entry name" value="FBPase"/>
    <property type="match status" value="1"/>
</dbReference>
<dbReference type="FunFam" id="3.30.540.10:FF:000002">
    <property type="entry name" value="Fructose-1,6-bisphosphatase class 1"/>
    <property type="match status" value="1"/>
</dbReference>
<dbReference type="FunFam" id="3.40.190.80:FF:000001">
    <property type="entry name" value="Fructose-1,6-bisphosphatase class 1"/>
    <property type="match status" value="1"/>
</dbReference>
<dbReference type="Gene3D" id="3.40.190.80">
    <property type="match status" value="1"/>
</dbReference>
<dbReference type="Gene3D" id="3.30.540.10">
    <property type="entry name" value="Fructose-1,6-Bisphosphatase, subunit A, domain 1"/>
    <property type="match status" value="1"/>
</dbReference>
<dbReference type="HAMAP" id="MF_01855">
    <property type="entry name" value="FBPase_class1"/>
    <property type="match status" value="1"/>
</dbReference>
<dbReference type="InterPro" id="IPR044015">
    <property type="entry name" value="FBPase_C_dom"/>
</dbReference>
<dbReference type="InterPro" id="IPR000146">
    <property type="entry name" value="FBPase_class-1"/>
</dbReference>
<dbReference type="InterPro" id="IPR033391">
    <property type="entry name" value="FBPase_N"/>
</dbReference>
<dbReference type="InterPro" id="IPR028343">
    <property type="entry name" value="FBPtase"/>
</dbReference>
<dbReference type="InterPro" id="IPR020548">
    <property type="entry name" value="Fructose_bisphosphatase_AS"/>
</dbReference>
<dbReference type="NCBIfam" id="NF006778">
    <property type="entry name" value="PRK09293.1-1"/>
    <property type="match status" value="1"/>
</dbReference>
<dbReference type="NCBIfam" id="NF006779">
    <property type="entry name" value="PRK09293.1-3"/>
    <property type="match status" value="1"/>
</dbReference>
<dbReference type="PANTHER" id="PTHR11556">
    <property type="entry name" value="FRUCTOSE-1,6-BISPHOSPHATASE-RELATED"/>
    <property type="match status" value="1"/>
</dbReference>
<dbReference type="PANTHER" id="PTHR11556:SF35">
    <property type="entry name" value="SEDOHEPTULOSE-1,7-BISPHOSPHATASE, CHLOROPLASTIC"/>
    <property type="match status" value="1"/>
</dbReference>
<dbReference type="Pfam" id="PF00316">
    <property type="entry name" value="FBPase"/>
    <property type="match status" value="1"/>
</dbReference>
<dbReference type="Pfam" id="PF18913">
    <property type="entry name" value="FBPase_C"/>
    <property type="match status" value="1"/>
</dbReference>
<dbReference type="PIRSF" id="PIRSF500210">
    <property type="entry name" value="FBPtase"/>
    <property type="match status" value="1"/>
</dbReference>
<dbReference type="PIRSF" id="PIRSF000904">
    <property type="entry name" value="FBPtase_SBPase"/>
    <property type="match status" value="1"/>
</dbReference>
<dbReference type="PRINTS" id="PR00115">
    <property type="entry name" value="F16BPHPHTASE"/>
</dbReference>
<dbReference type="SUPFAM" id="SSF56655">
    <property type="entry name" value="Carbohydrate phosphatase"/>
    <property type="match status" value="1"/>
</dbReference>
<dbReference type="PROSITE" id="PS00124">
    <property type="entry name" value="FBPASE"/>
    <property type="match status" value="1"/>
</dbReference>
<protein>
    <recommendedName>
        <fullName evidence="1">Fructose-1,6-bisphosphatase class 1</fullName>
        <shortName evidence="1">FBPase class 1</shortName>
        <ecNumber evidence="1">3.1.3.11</ecNumber>
    </recommendedName>
    <alternativeName>
        <fullName evidence="1">D-fructose-1,6-bisphosphate 1-phosphohydrolase class 1</fullName>
    </alternativeName>
</protein>
<reference key="1">
    <citation type="journal article" date="2003" name="Genome Res.">
        <title>Comparative genome analysis of Vibrio vulnificus, a marine pathogen.</title>
        <authorList>
            <person name="Chen C.-Y."/>
            <person name="Wu K.-M."/>
            <person name="Chang Y.-C."/>
            <person name="Chang C.-H."/>
            <person name="Tsai H.-C."/>
            <person name="Liao T.-L."/>
            <person name="Liu Y.-M."/>
            <person name="Chen H.-J."/>
            <person name="Shen A.B.-T."/>
            <person name="Li J.-C."/>
            <person name="Su T.-L."/>
            <person name="Shao C.-P."/>
            <person name="Lee C.-T."/>
            <person name="Hor L.-I."/>
            <person name="Tsai S.-F."/>
        </authorList>
    </citation>
    <scope>NUCLEOTIDE SEQUENCE [LARGE SCALE GENOMIC DNA]</scope>
    <source>
        <strain>YJ016</strain>
    </source>
</reference>
<organism>
    <name type="scientific">Vibrio vulnificus (strain YJ016)</name>
    <dbReference type="NCBI Taxonomy" id="196600"/>
    <lineage>
        <taxon>Bacteria</taxon>
        <taxon>Pseudomonadati</taxon>
        <taxon>Pseudomonadota</taxon>
        <taxon>Gammaproteobacteria</taxon>
        <taxon>Vibrionales</taxon>
        <taxon>Vibrionaceae</taxon>
        <taxon>Vibrio</taxon>
    </lineage>
</organism>
<gene>
    <name evidence="1" type="primary">fbp</name>
    <name type="ordered locus">VV0434</name>
</gene>
<sequence>MSGMRTLGEFIVEKQADFPHASGDLSSLLSSIRLAAKIVNREINKAGLVDITGAAGVENIQGEVQQKLDVYANEKFKSALEARDQVCGVASEEEDEAVAFNKELNKNAKYVVLMDPLDGSSNIDVNVSVGTIFSIYRRVSPIGTPPTQEDFLQPGHKQVAAGYIIYGSSTMLVYTTGNGVNGFTYDPSLGTFCLSHENMMIPQNGNIYSINEGNYIRFPMGVKKYIKYCQENVPEDGRPYTSRYIGSLVADFHRNLLKGGIYLYPSTQSHPQGKLRLLYECNPMAFLIEQAGGLASDGVNRILDLKPTELHQRVPFFVGSTNMVKKVEEFLEVYRDEA</sequence>
<evidence type="ECO:0000255" key="1">
    <source>
        <dbReference type="HAMAP-Rule" id="MF_01855"/>
    </source>
</evidence>
<proteinExistence type="inferred from homology"/>
<accession>Q7MPD0</accession>
<name>F16PA_VIBVY</name>
<comment type="catalytic activity">
    <reaction evidence="1">
        <text>beta-D-fructose 1,6-bisphosphate + H2O = beta-D-fructose 6-phosphate + phosphate</text>
        <dbReference type="Rhea" id="RHEA:11064"/>
        <dbReference type="ChEBI" id="CHEBI:15377"/>
        <dbReference type="ChEBI" id="CHEBI:32966"/>
        <dbReference type="ChEBI" id="CHEBI:43474"/>
        <dbReference type="ChEBI" id="CHEBI:57634"/>
        <dbReference type="EC" id="3.1.3.11"/>
    </reaction>
</comment>
<comment type="cofactor">
    <cofactor evidence="1">
        <name>Mg(2+)</name>
        <dbReference type="ChEBI" id="CHEBI:18420"/>
    </cofactor>
    <text evidence="1">Binds 2 magnesium ions per subunit.</text>
</comment>
<comment type="pathway">
    <text evidence="1">Carbohydrate biosynthesis; gluconeogenesis.</text>
</comment>
<comment type="subunit">
    <text evidence="1">Homotetramer.</text>
</comment>
<comment type="subcellular location">
    <subcellularLocation>
        <location evidence="1">Cytoplasm</location>
    </subcellularLocation>
</comment>
<comment type="similarity">
    <text evidence="1">Belongs to the FBPase class 1 family.</text>
</comment>
<feature type="chain" id="PRO_0000364745" description="Fructose-1,6-bisphosphatase class 1">
    <location>
        <begin position="1"/>
        <end position="338"/>
    </location>
</feature>
<feature type="binding site" evidence="1">
    <location>
        <position position="92"/>
    </location>
    <ligand>
        <name>Mg(2+)</name>
        <dbReference type="ChEBI" id="CHEBI:18420"/>
        <label>1</label>
    </ligand>
</feature>
<feature type="binding site" evidence="1">
    <location>
        <position position="115"/>
    </location>
    <ligand>
        <name>Mg(2+)</name>
        <dbReference type="ChEBI" id="CHEBI:18420"/>
        <label>1</label>
    </ligand>
</feature>
<feature type="binding site" evidence="1">
    <location>
        <position position="115"/>
    </location>
    <ligand>
        <name>Mg(2+)</name>
        <dbReference type="ChEBI" id="CHEBI:18420"/>
        <label>2</label>
    </ligand>
</feature>
<feature type="binding site" evidence="1">
    <location>
        <position position="117"/>
    </location>
    <ligand>
        <name>Mg(2+)</name>
        <dbReference type="ChEBI" id="CHEBI:18420"/>
        <label>1</label>
    </ligand>
</feature>
<feature type="binding site" evidence="1">
    <location>
        <begin position="118"/>
        <end position="121"/>
    </location>
    <ligand>
        <name>substrate</name>
    </ligand>
</feature>
<feature type="binding site" evidence="1">
    <location>
        <position position="118"/>
    </location>
    <ligand>
        <name>Mg(2+)</name>
        <dbReference type="ChEBI" id="CHEBI:18420"/>
        <label>2</label>
    </ligand>
</feature>
<feature type="binding site" evidence="1">
    <location>
        <position position="211"/>
    </location>
    <ligand>
        <name>substrate</name>
    </ligand>
</feature>
<feature type="binding site" evidence="1">
    <location>
        <position position="244"/>
    </location>
    <ligand>
        <name>substrate</name>
    </ligand>
</feature>
<feature type="binding site" evidence="1">
    <location>
        <begin position="262"/>
        <end position="264"/>
    </location>
    <ligand>
        <name>substrate</name>
    </ligand>
</feature>
<feature type="binding site" evidence="1">
    <location>
        <position position="274"/>
    </location>
    <ligand>
        <name>substrate</name>
    </ligand>
</feature>
<feature type="binding site" evidence="1">
    <location>
        <position position="280"/>
    </location>
    <ligand>
        <name>Mg(2+)</name>
        <dbReference type="ChEBI" id="CHEBI:18420"/>
        <label>2</label>
    </ligand>
</feature>
<keyword id="KW-0119">Carbohydrate metabolism</keyword>
<keyword id="KW-0963">Cytoplasm</keyword>
<keyword id="KW-0378">Hydrolase</keyword>
<keyword id="KW-0460">Magnesium</keyword>
<keyword id="KW-0479">Metal-binding</keyword>